<organism>
    <name type="scientific">Chlorobaculum tepidum (strain ATCC 49652 / DSM 12025 / NBRC 103806 / TLS)</name>
    <name type="common">Chlorobium tepidum</name>
    <dbReference type="NCBI Taxonomy" id="194439"/>
    <lineage>
        <taxon>Bacteria</taxon>
        <taxon>Pseudomonadati</taxon>
        <taxon>Chlorobiota</taxon>
        <taxon>Chlorobiia</taxon>
        <taxon>Chlorobiales</taxon>
        <taxon>Chlorobiaceae</taxon>
        <taxon>Chlorobaculum</taxon>
    </lineage>
</organism>
<gene>
    <name evidence="1" type="primary">rpmI</name>
    <name type="ordered locus">CT2128</name>
</gene>
<dbReference type="EMBL" id="AE006470">
    <property type="protein sequence ID" value="AAM73344.1"/>
    <property type="molecule type" value="Genomic_DNA"/>
</dbReference>
<dbReference type="RefSeq" id="NP_663002.1">
    <property type="nucleotide sequence ID" value="NC_002932.3"/>
</dbReference>
<dbReference type="RefSeq" id="WP_010933782.1">
    <property type="nucleotide sequence ID" value="NC_002932.3"/>
</dbReference>
<dbReference type="SMR" id="Q8KAM8"/>
<dbReference type="STRING" id="194439.CT2128"/>
<dbReference type="EnsemblBacteria" id="AAM73344">
    <property type="protein sequence ID" value="AAM73344"/>
    <property type="gene ID" value="CT2128"/>
</dbReference>
<dbReference type="KEGG" id="cte:CT2128"/>
<dbReference type="PATRIC" id="fig|194439.7.peg.1929"/>
<dbReference type="eggNOG" id="COG0291">
    <property type="taxonomic scope" value="Bacteria"/>
</dbReference>
<dbReference type="HOGENOM" id="CLU_169643_4_3_10"/>
<dbReference type="OrthoDB" id="47476at2"/>
<dbReference type="Proteomes" id="UP000001007">
    <property type="component" value="Chromosome"/>
</dbReference>
<dbReference type="GO" id="GO:0022625">
    <property type="term" value="C:cytosolic large ribosomal subunit"/>
    <property type="evidence" value="ECO:0007669"/>
    <property type="project" value="TreeGrafter"/>
</dbReference>
<dbReference type="GO" id="GO:0003735">
    <property type="term" value="F:structural constituent of ribosome"/>
    <property type="evidence" value="ECO:0007669"/>
    <property type="project" value="InterPro"/>
</dbReference>
<dbReference type="GO" id="GO:0006412">
    <property type="term" value="P:translation"/>
    <property type="evidence" value="ECO:0007669"/>
    <property type="project" value="UniProtKB-UniRule"/>
</dbReference>
<dbReference type="FunFam" id="4.10.410.60:FF:000001">
    <property type="entry name" value="50S ribosomal protein L35"/>
    <property type="match status" value="1"/>
</dbReference>
<dbReference type="Gene3D" id="4.10.410.60">
    <property type="match status" value="1"/>
</dbReference>
<dbReference type="HAMAP" id="MF_00514">
    <property type="entry name" value="Ribosomal_bL35"/>
    <property type="match status" value="1"/>
</dbReference>
<dbReference type="InterPro" id="IPR001706">
    <property type="entry name" value="Ribosomal_bL35"/>
</dbReference>
<dbReference type="InterPro" id="IPR021137">
    <property type="entry name" value="Ribosomal_bL35-like"/>
</dbReference>
<dbReference type="InterPro" id="IPR018265">
    <property type="entry name" value="Ribosomal_bL35_CS"/>
</dbReference>
<dbReference type="InterPro" id="IPR037229">
    <property type="entry name" value="Ribosomal_bL35_sf"/>
</dbReference>
<dbReference type="NCBIfam" id="TIGR00001">
    <property type="entry name" value="rpmI_bact"/>
    <property type="match status" value="1"/>
</dbReference>
<dbReference type="PANTHER" id="PTHR33343">
    <property type="entry name" value="54S RIBOSOMAL PROTEIN BL35M"/>
    <property type="match status" value="1"/>
</dbReference>
<dbReference type="PANTHER" id="PTHR33343:SF1">
    <property type="entry name" value="LARGE RIBOSOMAL SUBUNIT PROTEIN BL35M"/>
    <property type="match status" value="1"/>
</dbReference>
<dbReference type="Pfam" id="PF01632">
    <property type="entry name" value="Ribosomal_L35p"/>
    <property type="match status" value="1"/>
</dbReference>
<dbReference type="PRINTS" id="PR00064">
    <property type="entry name" value="RIBOSOMALL35"/>
</dbReference>
<dbReference type="SUPFAM" id="SSF143034">
    <property type="entry name" value="L35p-like"/>
    <property type="match status" value="1"/>
</dbReference>
<dbReference type="PROSITE" id="PS00936">
    <property type="entry name" value="RIBOSOMAL_L35"/>
    <property type="match status" value="1"/>
</dbReference>
<keyword id="KW-1185">Reference proteome</keyword>
<keyword id="KW-0687">Ribonucleoprotein</keyword>
<keyword id="KW-0689">Ribosomal protein</keyword>
<protein>
    <recommendedName>
        <fullName evidence="1">Large ribosomal subunit protein bL35</fullName>
    </recommendedName>
    <alternativeName>
        <fullName evidence="3">50S ribosomal protein L35</fullName>
    </alternativeName>
</protein>
<proteinExistence type="inferred from homology"/>
<reference key="1">
    <citation type="journal article" date="2002" name="Proc. Natl. Acad. Sci. U.S.A.">
        <title>The complete genome sequence of Chlorobium tepidum TLS, a photosynthetic, anaerobic, green-sulfur bacterium.</title>
        <authorList>
            <person name="Eisen J.A."/>
            <person name="Nelson K.E."/>
            <person name="Paulsen I.T."/>
            <person name="Heidelberg J.F."/>
            <person name="Wu M."/>
            <person name="Dodson R.J."/>
            <person name="DeBoy R.T."/>
            <person name="Gwinn M.L."/>
            <person name="Nelson W.C."/>
            <person name="Haft D.H."/>
            <person name="Hickey E.K."/>
            <person name="Peterson J.D."/>
            <person name="Durkin A.S."/>
            <person name="Kolonay J.F."/>
            <person name="Yang F."/>
            <person name="Holt I.E."/>
            <person name="Umayam L.A."/>
            <person name="Mason T.M."/>
            <person name="Brenner M."/>
            <person name="Shea T.P."/>
            <person name="Parksey D.S."/>
            <person name="Nierman W.C."/>
            <person name="Feldblyum T.V."/>
            <person name="Hansen C.L."/>
            <person name="Craven M.B."/>
            <person name="Radune D."/>
            <person name="Vamathevan J.J."/>
            <person name="Khouri H.M."/>
            <person name="White O."/>
            <person name="Gruber T.M."/>
            <person name="Ketchum K.A."/>
            <person name="Venter J.C."/>
            <person name="Tettelin H."/>
            <person name="Bryant D.A."/>
            <person name="Fraser C.M."/>
        </authorList>
    </citation>
    <scope>NUCLEOTIDE SEQUENCE [LARGE SCALE GENOMIC DNA]</scope>
    <source>
        <strain>ATCC 49652 / DSM 12025 / NBRC 103806 / TLS</strain>
    </source>
</reference>
<feature type="chain" id="PRO_0000177348" description="Large ribosomal subunit protein bL35">
    <location>
        <begin position="1"/>
        <end position="64"/>
    </location>
</feature>
<feature type="region of interest" description="Disordered" evidence="2">
    <location>
        <begin position="19"/>
        <end position="41"/>
    </location>
</feature>
<feature type="compositionally biased region" description="Basic and acidic residues" evidence="2">
    <location>
        <begin position="25"/>
        <end position="35"/>
    </location>
</feature>
<sequence>MPKMKSHRGACKRFKATASGKVKRERMNGSHNLEHKNRKRTRRLHQSTLVDSTKEKQIKRMILA</sequence>
<name>RL35_CHLTE</name>
<comment type="similarity">
    <text evidence="1">Belongs to the bacterial ribosomal protein bL35 family.</text>
</comment>
<accession>Q8KAM8</accession>
<evidence type="ECO:0000255" key="1">
    <source>
        <dbReference type="HAMAP-Rule" id="MF_00514"/>
    </source>
</evidence>
<evidence type="ECO:0000256" key="2">
    <source>
        <dbReference type="SAM" id="MobiDB-lite"/>
    </source>
</evidence>
<evidence type="ECO:0000305" key="3"/>